<comment type="function">
    <text evidence="1">One of the early assembly proteins it binds 23S rRNA. One of the proteins that surrounds the polypeptide exit tunnel on the outside of the ribosome. Forms the main docking site for trigger factor binding to the ribosome.</text>
</comment>
<comment type="subunit">
    <text evidence="1">Part of the 50S ribosomal subunit. Contacts protein L29, and trigger factor when it is bound to the ribosome.</text>
</comment>
<comment type="similarity">
    <text evidence="1">Belongs to the universal ribosomal protein uL23 family.</text>
</comment>
<proteinExistence type="inferred from homology"/>
<sequence>MSSNEKIFSVLRAPRVSEKTARLQEISNQYVFEVSNEATKADVKAAVEQLFDVKVKAVNVVNVKGKSKSFRNRAGSRGNWRKAYVRLVDGQSIDVTAKA</sequence>
<name>RL23_XANCB</name>
<evidence type="ECO:0000255" key="1">
    <source>
        <dbReference type="HAMAP-Rule" id="MF_01369"/>
    </source>
</evidence>
<evidence type="ECO:0000305" key="2"/>
<keyword id="KW-0687">Ribonucleoprotein</keyword>
<keyword id="KW-0689">Ribosomal protein</keyword>
<keyword id="KW-0694">RNA-binding</keyword>
<keyword id="KW-0699">rRNA-binding</keyword>
<protein>
    <recommendedName>
        <fullName evidence="1">Large ribosomal subunit protein uL23</fullName>
    </recommendedName>
    <alternativeName>
        <fullName evidence="2">50S ribosomal protein L23</fullName>
    </alternativeName>
</protein>
<gene>
    <name evidence="1" type="primary">rplW</name>
    <name type="ordered locus">xcc-b100_3457</name>
</gene>
<feature type="chain" id="PRO_1000144625" description="Large ribosomal subunit protein uL23">
    <location>
        <begin position="1"/>
        <end position="99"/>
    </location>
</feature>
<dbReference type="EMBL" id="AM920689">
    <property type="protein sequence ID" value="CAP52822.1"/>
    <property type="molecule type" value="Genomic_DNA"/>
</dbReference>
<dbReference type="SMR" id="B0RU80"/>
<dbReference type="KEGG" id="xca:xcc-b100_3457"/>
<dbReference type="HOGENOM" id="CLU_037562_3_1_6"/>
<dbReference type="Proteomes" id="UP000001188">
    <property type="component" value="Chromosome"/>
</dbReference>
<dbReference type="GO" id="GO:1990904">
    <property type="term" value="C:ribonucleoprotein complex"/>
    <property type="evidence" value="ECO:0007669"/>
    <property type="project" value="UniProtKB-KW"/>
</dbReference>
<dbReference type="GO" id="GO:0005840">
    <property type="term" value="C:ribosome"/>
    <property type="evidence" value="ECO:0007669"/>
    <property type="project" value="UniProtKB-KW"/>
</dbReference>
<dbReference type="GO" id="GO:0019843">
    <property type="term" value="F:rRNA binding"/>
    <property type="evidence" value="ECO:0007669"/>
    <property type="project" value="UniProtKB-UniRule"/>
</dbReference>
<dbReference type="GO" id="GO:0003735">
    <property type="term" value="F:structural constituent of ribosome"/>
    <property type="evidence" value="ECO:0007669"/>
    <property type="project" value="InterPro"/>
</dbReference>
<dbReference type="GO" id="GO:0006412">
    <property type="term" value="P:translation"/>
    <property type="evidence" value="ECO:0007669"/>
    <property type="project" value="UniProtKB-UniRule"/>
</dbReference>
<dbReference type="FunFam" id="3.30.70.330:FF:000001">
    <property type="entry name" value="50S ribosomal protein L23"/>
    <property type="match status" value="1"/>
</dbReference>
<dbReference type="Gene3D" id="3.30.70.330">
    <property type="match status" value="1"/>
</dbReference>
<dbReference type="HAMAP" id="MF_01369_B">
    <property type="entry name" value="Ribosomal_uL23_B"/>
    <property type="match status" value="1"/>
</dbReference>
<dbReference type="InterPro" id="IPR012677">
    <property type="entry name" value="Nucleotide-bd_a/b_plait_sf"/>
</dbReference>
<dbReference type="InterPro" id="IPR013025">
    <property type="entry name" value="Ribosomal_uL23-like"/>
</dbReference>
<dbReference type="InterPro" id="IPR012678">
    <property type="entry name" value="Ribosomal_uL23/eL15/eS24_sf"/>
</dbReference>
<dbReference type="NCBIfam" id="NF004359">
    <property type="entry name" value="PRK05738.1-3"/>
    <property type="match status" value="1"/>
</dbReference>
<dbReference type="NCBIfam" id="NF004363">
    <property type="entry name" value="PRK05738.2-4"/>
    <property type="match status" value="1"/>
</dbReference>
<dbReference type="PANTHER" id="PTHR11620">
    <property type="entry name" value="60S RIBOSOMAL PROTEIN L23A"/>
    <property type="match status" value="1"/>
</dbReference>
<dbReference type="Pfam" id="PF00276">
    <property type="entry name" value="Ribosomal_L23"/>
    <property type="match status" value="1"/>
</dbReference>
<dbReference type="SUPFAM" id="SSF54189">
    <property type="entry name" value="Ribosomal proteins S24e, L23 and L15e"/>
    <property type="match status" value="1"/>
</dbReference>
<accession>B0RU80</accession>
<reference key="1">
    <citation type="journal article" date="2008" name="J. Biotechnol.">
        <title>The genome of Xanthomonas campestris pv. campestris B100 and its use for the reconstruction of metabolic pathways involved in xanthan biosynthesis.</title>
        <authorList>
            <person name="Vorhoelter F.-J."/>
            <person name="Schneiker S."/>
            <person name="Goesmann A."/>
            <person name="Krause L."/>
            <person name="Bekel T."/>
            <person name="Kaiser O."/>
            <person name="Linke B."/>
            <person name="Patschkowski T."/>
            <person name="Rueckert C."/>
            <person name="Schmid J."/>
            <person name="Sidhu V.K."/>
            <person name="Sieber V."/>
            <person name="Tauch A."/>
            <person name="Watt S.A."/>
            <person name="Weisshaar B."/>
            <person name="Becker A."/>
            <person name="Niehaus K."/>
            <person name="Puehler A."/>
        </authorList>
    </citation>
    <scope>NUCLEOTIDE SEQUENCE [LARGE SCALE GENOMIC DNA]</scope>
    <source>
        <strain>B100</strain>
    </source>
</reference>
<organism>
    <name type="scientific">Xanthomonas campestris pv. campestris (strain B100)</name>
    <dbReference type="NCBI Taxonomy" id="509169"/>
    <lineage>
        <taxon>Bacteria</taxon>
        <taxon>Pseudomonadati</taxon>
        <taxon>Pseudomonadota</taxon>
        <taxon>Gammaproteobacteria</taxon>
        <taxon>Lysobacterales</taxon>
        <taxon>Lysobacteraceae</taxon>
        <taxon>Xanthomonas</taxon>
    </lineage>
</organism>